<evidence type="ECO:0000250" key="1">
    <source>
        <dbReference type="UniProtKB" id="Q15109"/>
    </source>
</evidence>
<evidence type="ECO:0000250" key="2">
    <source>
        <dbReference type="UniProtKB" id="Q62151"/>
    </source>
</evidence>
<evidence type="ECO:0000255" key="3"/>
<evidence type="ECO:0000255" key="4">
    <source>
        <dbReference type="PROSITE-ProRule" id="PRU00114"/>
    </source>
</evidence>
<evidence type="ECO:0000256" key="5">
    <source>
        <dbReference type="SAM" id="MobiDB-lite"/>
    </source>
</evidence>
<evidence type="ECO:0000269" key="6">
    <source>
    </source>
</evidence>
<gene>
    <name type="primary">AGER</name>
    <name type="synonym">RAGE</name>
</gene>
<keyword id="KW-1003">Cell membrane</keyword>
<keyword id="KW-0966">Cell projection</keyword>
<keyword id="KW-0903">Direct protein sequencing</keyword>
<keyword id="KW-1015">Disulfide bond</keyword>
<keyword id="KW-0227">DNA damage</keyword>
<keyword id="KW-0234">DNA repair</keyword>
<keyword id="KW-0235">DNA replication</keyword>
<keyword id="KW-0238">DNA-binding</keyword>
<keyword id="KW-0967">Endosome</keyword>
<keyword id="KW-0325">Glycoprotein</keyword>
<keyword id="KW-0393">Immunoglobulin domain</keyword>
<keyword id="KW-0395">Inflammatory response</keyword>
<keyword id="KW-0472">Membrane</keyword>
<keyword id="KW-0539">Nucleus</keyword>
<keyword id="KW-0581">Phagocytosis</keyword>
<keyword id="KW-0597">Phosphoprotein</keyword>
<keyword id="KW-0675">Receptor</keyword>
<keyword id="KW-1185">Reference proteome</keyword>
<keyword id="KW-0677">Repeat</keyword>
<keyword id="KW-0694">RNA-binding</keyword>
<keyword id="KW-0732">Signal</keyword>
<keyword id="KW-0812">Transmembrane</keyword>
<keyword id="KW-1133">Transmembrane helix</keyword>
<keyword id="KW-0832">Ubl conjugation</keyword>
<accession>Q28173</accession>
<proteinExistence type="evidence at protein level"/>
<sequence length="416" mass="44182">MAAGAVVGAWMLVLSLGGTVTGDQNITARIGKPLVLNCKGAPKKPPQQLEWKLNTGRTEAWKVLSPQGDPWDSVARVLPNGSLLLPAVGIQDEGTFRCRATSRSGKETKSNYRVRVYQIPGKPEIVDPASELMAGVPNKVGTCVSEGGYPAGTLNWLLDGKTLIPDGKGVSVKEETKRHPKTGLFTLHSELMVTPARGGALHPTFSCSFTPGLPRRRALHTAPIQLRVWSEHRGGEGPNVDAVPLKEVQLVVEPEGGAVAPGGTVTLTCEAPAQPPPQIHWIKDGRPLPLPPGPMLLLPEVGPEDQGTYSCVATHPSHGPQESRAVSVTIIETGEEGTTAGSVEGPGLETLALTLGILGGLGTVALLIGVIVWHRRRQRKGQERKVPENQEEEEEERAELNQPEEPEAAESSTGGP</sequence>
<feature type="signal peptide" evidence="6">
    <location>
        <begin position="1"/>
        <end position="22"/>
    </location>
</feature>
<feature type="chain" id="PRO_0000014922" description="Advanced glycosylation end product-specific receptor">
    <location>
        <begin position="23"/>
        <end position="416"/>
    </location>
</feature>
<feature type="topological domain" description="Extracellular" evidence="3">
    <location>
        <begin position="23"/>
        <end position="352"/>
    </location>
</feature>
<feature type="transmembrane region" description="Helical" evidence="3">
    <location>
        <begin position="353"/>
        <end position="373"/>
    </location>
</feature>
<feature type="topological domain" description="Cytoplasmic" evidence="3">
    <location>
        <begin position="374"/>
        <end position="416"/>
    </location>
</feature>
<feature type="domain" description="Ig-like V-type">
    <location>
        <begin position="23"/>
        <end position="115"/>
    </location>
</feature>
<feature type="domain" description="Ig-like C2-type 1">
    <location>
        <begin position="123"/>
        <end position="220"/>
    </location>
</feature>
<feature type="domain" description="Ig-like C2-type 2">
    <location>
        <begin position="238"/>
        <end position="327"/>
    </location>
</feature>
<feature type="region of interest" description="Disordered" evidence="5">
    <location>
        <begin position="377"/>
        <end position="416"/>
    </location>
</feature>
<feature type="compositionally biased region" description="Acidic residues" evidence="5">
    <location>
        <begin position="389"/>
        <end position="408"/>
    </location>
</feature>
<feature type="glycosylation site" description="N-linked (GlcNAc...) asparagine" evidence="3">
    <location>
        <position position="25"/>
    </location>
</feature>
<feature type="glycosylation site" description="N-linked (GlcNAc...) asparagine" evidence="3">
    <location>
        <position position="80"/>
    </location>
</feature>
<feature type="disulfide bond" evidence="4">
    <location>
        <begin position="38"/>
        <end position="98"/>
    </location>
</feature>
<feature type="disulfide bond" evidence="4">
    <location>
        <begin position="143"/>
        <end position="207"/>
    </location>
</feature>
<feature type="disulfide bond" description="Interchain" evidence="4">
    <location>
        <position position="269"/>
    </location>
</feature>
<feature type="disulfide bond" description="Interchain" evidence="4">
    <location>
        <position position="311"/>
    </location>
</feature>
<protein>
    <recommendedName>
        <fullName>Advanced glycosylation end product-specific receptor</fullName>
    </recommendedName>
    <alternativeName>
        <fullName>Receptor for advanced glycosylation end products</fullName>
    </alternativeName>
</protein>
<dbReference type="EMBL" id="M91212">
    <property type="protein sequence ID" value="AAA03575.1"/>
    <property type="molecule type" value="mRNA"/>
</dbReference>
<dbReference type="PIR" id="A42879">
    <property type="entry name" value="A42879"/>
</dbReference>
<dbReference type="RefSeq" id="NP_776407.1">
    <property type="nucleotide sequence ID" value="NM_173982.3"/>
</dbReference>
<dbReference type="SMR" id="Q28173"/>
<dbReference type="FunCoup" id="Q28173">
    <property type="interactions" value="62"/>
</dbReference>
<dbReference type="STRING" id="9913.ENSBTAP00000019179"/>
<dbReference type="GlyCosmos" id="Q28173">
    <property type="glycosylation" value="2 sites, No reported glycans"/>
</dbReference>
<dbReference type="GlyGen" id="Q28173">
    <property type="glycosylation" value="2 sites"/>
</dbReference>
<dbReference type="PaxDb" id="9913-ENSBTAP00000019179"/>
<dbReference type="GeneID" id="280986"/>
<dbReference type="KEGG" id="bta:280986"/>
<dbReference type="CTD" id="177"/>
<dbReference type="eggNOG" id="ENOG502SQ8N">
    <property type="taxonomic scope" value="Eukaryota"/>
</dbReference>
<dbReference type="InParanoid" id="Q28173"/>
<dbReference type="OrthoDB" id="10055806at2759"/>
<dbReference type="Proteomes" id="UP000009136">
    <property type="component" value="Unplaced"/>
</dbReference>
<dbReference type="GO" id="GO:0009986">
    <property type="term" value="C:cell surface"/>
    <property type="evidence" value="ECO:0000250"/>
    <property type="project" value="UniProtKB"/>
</dbReference>
<dbReference type="GO" id="GO:0005769">
    <property type="term" value="C:early endosome"/>
    <property type="evidence" value="ECO:0007669"/>
    <property type="project" value="UniProtKB-SubCell"/>
</dbReference>
<dbReference type="GO" id="GO:0005634">
    <property type="term" value="C:nucleus"/>
    <property type="evidence" value="ECO:0000250"/>
    <property type="project" value="UniProtKB"/>
</dbReference>
<dbReference type="GO" id="GO:0001891">
    <property type="term" value="C:phagocytic cup"/>
    <property type="evidence" value="ECO:0000250"/>
    <property type="project" value="UniProtKB"/>
</dbReference>
<dbReference type="GO" id="GO:0005886">
    <property type="term" value="C:plasma membrane"/>
    <property type="evidence" value="ECO:0000318"/>
    <property type="project" value="GO_Central"/>
</dbReference>
<dbReference type="GO" id="GO:0003677">
    <property type="term" value="F:DNA binding"/>
    <property type="evidence" value="ECO:0000250"/>
    <property type="project" value="UniProtKB"/>
</dbReference>
<dbReference type="GO" id="GO:0042393">
    <property type="term" value="F:histone binding"/>
    <property type="evidence" value="ECO:0000250"/>
    <property type="project" value="UniProtKB"/>
</dbReference>
<dbReference type="GO" id="GO:0005055">
    <property type="term" value="F:laminin receptor activity"/>
    <property type="evidence" value="ECO:0000318"/>
    <property type="project" value="GO_Central"/>
</dbReference>
<dbReference type="GO" id="GO:0003723">
    <property type="term" value="F:RNA binding"/>
    <property type="evidence" value="ECO:0000250"/>
    <property type="project" value="UniProtKB"/>
</dbReference>
<dbReference type="GO" id="GO:0038023">
    <property type="term" value="F:signaling receptor activity"/>
    <property type="evidence" value="ECO:0000318"/>
    <property type="project" value="GO_Central"/>
</dbReference>
<dbReference type="GO" id="GO:0006954">
    <property type="term" value="P:inflammatory response"/>
    <property type="evidence" value="ECO:0007669"/>
    <property type="project" value="UniProtKB-KW"/>
</dbReference>
<dbReference type="GO" id="GO:2000105">
    <property type="term" value="P:positive regulation of DNA-templated DNA replication"/>
    <property type="evidence" value="ECO:0000250"/>
    <property type="project" value="UniProtKB"/>
</dbReference>
<dbReference type="GO" id="GO:2000781">
    <property type="term" value="P:positive regulation of double-strand break repair"/>
    <property type="evidence" value="ECO:0000250"/>
    <property type="project" value="UniProtKB"/>
</dbReference>
<dbReference type="GO" id="GO:0050727">
    <property type="term" value="P:regulation of inflammatory response"/>
    <property type="evidence" value="ECO:0000318"/>
    <property type="project" value="GO_Central"/>
</dbReference>
<dbReference type="GO" id="GO:1900744">
    <property type="term" value="P:regulation of p38MAPK cascade"/>
    <property type="evidence" value="ECO:0000318"/>
    <property type="project" value="GO_Central"/>
</dbReference>
<dbReference type="CDD" id="cd00096">
    <property type="entry name" value="Ig"/>
    <property type="match status" value="1"/>
</dbReference>
<dbReference type="FunFam" id="2.60.40.10:FF:000969">
    <property type="entry name" value="Advanced glycosylation end product-specific receptor"/>
    <property type="match status" value="1"/>
</dbReference>
<dbReference type="FunFam" id="2.60.40.10:FF:001470">
    <property type="entry name" value="Advanced glycosylation end product-specific receptor"/>
    <property type="match status" value="1"/>
</dbReference>
<dbReference type="Gene3D" id="2.60.40.10">
    <property type="entry name" value="Immunoglobulins"/>
    <property type="match status" value="3"/>
</dbReference>
<dbReference type="InterPro" id="IPR013162">
    <property type="entry name" value="CD80_C2-set"/>
</dbReference>
<dbReference type="InterPro" id="IPR007110">
    <property type="entry name" value="Ig-like_dom"/>
</dbReference>
<dbReference type="InterPro" id="IPR036179">
    <property type="entry name" value="Ig-like_dom_sf"/>
</dbReference>
<dbReference type="InterPro" id="IPR013783">
    <property type="entry name" value="Ig-like_fold"/>
</dbReference>
<dbReference type="InterPro" id="IPR003006">
    <property type="entry name" value="Ig/MHC_CS"/>
</dbReference>
<dbReference type="InterPro" id="IPR003599">
    <property type="entry name" value="Ig_sub"/>
</dbReference>
<dbReference type="InterPro" id="IPR003598">
    <property type="entry name" value="Ig_sub2"/>
</dbReference>
<dbReference type="InterPro" id="IPR013151">
    <property type="entry name" value="Immunoglobulin_dom"/>
</dbReference>
<dbReference type="InterPro" id="IPR051116">
    <property type="entry name" value="Surface_Rcpt/Adhesion_Mol"/>
</dbReference>
<dbReference type="PANTHER" id="PTHR11973:SF20">
    <property type="entry name" value="ADVANCED GLYCOSYLATION END PRODUCT-SPECIFIC RECEPTOR"/>
    <property type="match status" value="1"/>
</dbReference>
<dbReference type="PANTHER" id="PTHR11973">
    <property type="entry name" value="CELL SURFACE GLYCOPROTEIN MUC18-RELATED"/>
    <property type="match status" value="1"/>
</dbReference>
<dbReference type="Pfam" id="PF08205">
    <property type="entry name" value="C2-set_2"/>
    <property type="match status" value="1"/>
</dbReference>
<dbReference type="Pfam" id="PF00047">
    <property type="entry name" value="ig"/>
    <property type="match status" value="1"/>
</dbReference>
<dbReference type="Pfam" id="PF13895">
    <property type="entry name" value="Ig_2"/>
    <property type="match status" value="1"/>
</dbReference>
<dbReference type="SMART" id="SM00409">
    <property type="entry name" value="IG"/>
    <property type="match status" value="2"/>
</dbReference>
<dbReference type="SMART" id="SM00408">
    <property type="entry name" value="IGc2"/>
    <property type="match status" value="2"/>
</dbReference>
<dbReference type="SUPFAM" id="SSF48726">
    <property type="entry name" value="Immunoglobulin"/>
    <property type="match status" value="3"/>
</dbReference>
<dbReference type="PROSITE" id="PS50835">
    <property type="entry name" value="IG_LIKE"/>
    <property type="match status" value="3"/>
</dbReference>
<dbReference type="PROSITE" id="PS00290">
    <property type="entry name" value="IG_MHC"/>
    <property type="match status" value="1"/>
</dbReference>
<name>RAGE_BOVIN</name>
<comment type="function">
    <text evidence="1 2">Cell surface pattern recognition receptor that senses endogenous stress signals with a broad ligand repertoire including advanced glycation end products, S100 proteins, high-mobility group box 1 protein/HMGB1, amyloid beta/APP oligomers, nucleic acids, histones, phospholipids and glycosaminoglycans. Advanced glycosylation end products are nonenzymatically glycosylated proteins which accumulate in vascular tissue in aging and at an accelerated rate in diabetes. These ligands accumulate at inflammatory sites during the pathogenesis of various diseases including diabetes, vascular complications, neurodegenerative disorders and cancers, and RAGE transduces their binding into pro-inflammatory responses. Upon ligand binding, uses TIRAP and MYD88 as adapters to transduce the signal ultimately leading to the induction of inflammatory cytokines IL6, IL8 and TNFalpha through activation of NF-kappa-B. Interaction with S100A12 on endothelium, mononuclear phagocytes, and lymphocytes triggers cellular activation, with generation of key pro-inflammatory mediators (By similarity). Interaction with S100B after myocardial infarction may play a role in myocyte apoptosis by activating ERK1/2 and p53/TP53 signaling (By similarity). Contributes to the translocation of amyloid-beta peptide (ABPP) across the cell membrane from the extracellular to the intracellular space in cortical neurons. ABPP-initiated RAGE signaling, especially stimulation of p38 mitogen-activated protein kinase (MAPK), has the capacity to drive a transport system delivering ABPP as a complex with RAGE to the intraneuronal space. Participates in endothelial albumin transcytosis together with HMGB1 through the RAGE/SRC/Caveolin-1 pathway, leading to endothelial hyperpermeability. Mediates the loading of HMGB1 in extracellular vesicles (EVs) that shuttle HMGB1 to hepatocytes by transferrin-mediated endocytosis and subsequently promote hepatocyte pyroptosis by activating the NLRP3 inflammasome. Binds to DNA and promotes extracellular hypomethylated DNA (CpG DNA) uptake by cells via the endosomal route to activate inflammatory responses (By similarity). Mediates phagocytosis by non-professional phagocytes (NPP) and this is enhanced by binding to ligands including RNA, DNA, HMGB1 and histones (By similarity). Promotes NPP-mediated phagocytosis of Saccharomyces cerevisiae spores by binding to RNA attached to the spore wall (By similarity). Also promotes NPP-mediated phagocytosis of apoptotic cells (By similarity). Following DNA damage, recruited to DNA double-strand break sites where it colocalizes with the MRN repair complex via interaction with double-strand break repair protein MRE11 (By similarity). Enhances the endonuclease activity of MRE11, promoting the end resection of damaged DNA (By similarity). Promotes DNA damage repair in trophoblasts which enhances trophoblast invasion and contributes to placental development and maintenance (By similarity). Protects cells from DNA replication stress by localizing to damaged replication forks where it stabilizes the MCM2-7 complex and promotes faithful progression of the replication fork (By similarity).</text>
</comment>
<comment type="subunit">
    <text evidence="1 2">Constitutive homodimer; disulfide-linked. Forms homooligomers (By similarity). Interacts with S100A1 and APP (By similarity). Interacts with S100B, S100A12 and S100A14. Interacts with TIRAP. Interacts with HMGB1 (By similarity). Interacts with LGP2; this interaction plays an important role in AGER-mediated pro-inflammatory responses and cytokine release (By similarity). Interacts with double-strand break repair protein MRE11 which is a core component of the MRN complex; the interaction enhances MRE11 endonuclease activity and promotes DNA repair (By similarity). Interacts with the MCM2-7 complex via interaction with complex member MCM2; the interaction is increased following DNA replication stress and stabilizes the MCM2-7 complex at replication forks (By similarity).</text>
</comment>
<comment type="subcellular location">
    <subcellularLocation>
        <location evidence="1">Cell membrane</location>
        <topology evidence="3">Single-pass type I membrane protein</topology>
    </subcellularLocation>
    <subcellularLocation>
        <location evidence="1">Cell projection</location>
        <location evidence="1">Phagocytic cup</location>
    </subcellularLocation>
    <subcellularLocation>
        <location evidence="1">Early endosome</location>
    </subcellularLocation>
    <subcellularLocation>
        <location evidence="2">Nucleus</location>
    </subcellularLocation>
    <text evidence="2">Nuclear translocation is enhanced by irradiation, hypoxia and reperfusion injury to brain or kidney.</text>
</comment>
<comment type="tissue specificity">
    <text>Endothelial cells.</text>
</comment>
<comment type="PTM">
    <text evidence="1 2">Phosphorylated on its cytoplasmic domain by PKCzeta/PRKCZ upon ligand binding (By similarity). Phosphorylated by ATM following DNA damage (By similarity).</text>
</comment>
<comment type="PTM">
    <text evidence="1">Targeted by the ubiquitin E3 ligase subunit FBXO10 to mediate its ubiquitination and degradation.</text>
</comment>
<organism>
    <name type="scientific">Bos taurus</name>
    <name type="common">Bovine</name>
    <dbReference type="NCBI Taxonomy" id="9913"/>
    <lineage>
        <taxon>Eukaryota</taxon>
        <taxon>Metazoa</taxon>
        <taxon>Chordata</taxon>
        <taxon>Craniata</taxon>
        <taxon>Vertebrata</taxon>
        <taxon>Euteleostomi</taxon>
        <taxon>Mammalia</taxon>
        <taxon>Eutheria</taxon>
        <taxon>Laurasiatheria</taxon>
        <taxon>Artiodactyla</taxon>
        <taxon>Ruminantia</taxon>
        <taxon>Pecora</taxon>
        <taxon>Bovidae</taxon>
        <taxon>Bovinae</taxon>
        <taxon>Bos</taxon>
    </lineage>
</organism>
<reference key="1">
    <citation type="journal article" date="1992" name="J. Biol. Chem.">
        <title>Cloning and expression of a cell surface receptor for advanced glycosylation end products of proteins.</title>
        <authorList>
            <person name="Neeper M."/>
            <person name="Schmidt A.M."/>
            <person name="Brett J."/>
            <person name="Yan S.D."/>
            <person name="Wang F."/>
            <person name="Pan Y.C."/>
            <person name="Elliston K."/>
            <person name="Stern D."/>
            <person name="Shaw A."/>
        </authorList>
    </citation>
    <scope>NUCLEOTIDE SEQUENCE [MRNA]</scope>
    <scope>PROTEIN SEQUENCE OF 63-70; 140-159; 162-168; 182-196 AND 228-231</scope>
    <source>
        <tissue>Lung</tissue>
    </source>
</reference>
<reference key="2">
    <citation type="journal article" date="1992" name="J. Biol. Chem.">
        <title>Isolation and characterization of two binding proteins for advanced glycosylation end products from bovine lung which are present on the endothelial cell surface.</title>
        <authorList>
            <person name="Schmidt A.M."/>
            <person name="Vianna M."/>
            <person name="Gerlach M."/>
            <person name="Brett J."/>
            <person name="Ryan J."/>
            <person name="Kao J."/>
            <person name="Esposito C."/>
            <person name="Hegarty H."/>
            <person name="Hurley W."/>
            <person name="Clauss M."/>
        </authorList>
    </citation>
    <scope>PROTEIN SEQUENCE OF 23-54</scope>
</reference>